<feature type="chain" id="PRO_0000074409" description="Putative zinc protease AlbF">
    <location>
        <begin position="1"/>
        <end position="427"/>
    </location>
</feature>
<feature type="active site" description="Proton acceptor" evidence="1">
    <location>
        <position position="69"/>
    </location>
</feature>
<feature type="binding site" evidence="1">
    <location>
        <position position="66"/>
    </location>
    <ligand>
        <name>Zn(2+)</name>
        <dbReference type="ChEBI" id="CHEBI:29105"/>
    </ligand>
</feature>
<feature type="binding site" evidence="1">
    <location>
        <position position="70"/>
    </location>
    <ligand>
        <name>Zn(2+)</name>
        <dbReference type="ChEBI" id="CHEBI:29105"/>
    </ligand>
</feature>
<feature type="binding site" evidence="1">
    <location>
        <position position="142"/>
    </location>
    <ligand>
        <name>Zn(2+)</name>
        <dbReference type="ChEBI" id="CHEBI:29105"/>
    </ligand>
</feature>
<comment type="function">
    <text evidence="1">Required for production of the bacteriocin subtilosin. Could catalyze some step in the processing of presubtilosin (By similarity).</text>
</comment>
<comment type="cofactor">
    <cofactor evidence="1">
        <name>Zn(2+)</name>
        <dbReference type="ChEBI" id="CHEBI:29105"/>
    </cofactor>
    <text evidence="1">Divalent metal cations. Binds Zn(2+).</text>
</comment>
<comment type="similarity">
    <text evidence="2">Belongs to the peptidase M16 family.</text>
</comment>
<accession>Q8RKH2</accession>
<protein>
    <recommendedName>
        <fullName>Putative zinc protease AlbF</fullName>
        <ecNumber>3.4.24.-</ecNumber>
    </recommendedName>
    <alternativeName>
        <fullName>Antilisterial bacteriocin subtilosin biosynthesis protein AlbF</fullName>
    </alternativeName>
</protein>
<name>ALBF_BACIU</name>
<proteinExistence type="inferred from homology"/>
<keyword id="KW-0045">Antibiotic biosynthesis</keyword>
<keyword id="KW-0871">Bacteriocin biosynthesis</keyword>
<keyword id="KW-0378">Hydrolase</keyword>
<keyword id="KW-0479">Metal-binding</keyword>
<keyword id="KW-0482">Metalloprotease</keyword>
<keyword id="KW-0645">Protease</keyword>
<keyword id="KW-0862">Zinc</keyword>
<dbReference type="EC" id="3.4.24.-"/>
<dbReference type="EMBL" id="AJ430547">
    <property type="protein sequence ID" value="CAD23204.1"/>
    <property type="molecule type" value="Genomic_DNA"/>
</dbReference>
<dbReference type="SMR" id="Q8RKH2"/>
<dbReference type="STRING" id="483913.AN935_18940"/>
<dbReference type="MEROPS" id="M16.A16"/>
<dbReference type="PATRIC" id="fig|1423.172.peg.2479"/>
<dbReference type="GO" id="GO:0046872">
    <property type="term" value="F:metal ion binding"/>
    <property type="evidence" value="ECO:0007669"/>
    <property type="project" value="UniProtKB-KW"/>
</dbReference>
<dbReference type="GO" id="GO:0008237">
    <property type="term" value="F:metallopeptidase activity"/>
    <property type="evidence" value="ECO:0007669"/>
    <property type="project" value="UniProtKB-KW"/>
</dbReference>
<dbReference type="GO" id="GO:0030152">
    <property type="term" value="P:bacteriocin biosynthetic process"/>
    <property type="evidence" value="ECO:0007669"/>
    <property type="project" value="UniProtKB-KW"/>
</dbReference>
<dbReference type="GO" id="GO:0006508">
    <property type="term" value="P:proteolysis"/>
    <property type="evidence" value="ECO:0007669"/>
    <property type="project" value="UniProtKB-KW"/>
</dbReference>
<dbReference type="Gene3D" id="3.30.830.10">
    <property type="entry name" value="Metalloenzyme, LuxS/M16 peptidase-like"/>
    <property type="match status" value="1"/>
</dbReference>
<dbReference type="InterPro" id="IPR011249">
    <property type="entry name" value="Metalloenz_LuxS/M16"/>
</dbReference>
<dbReference type="InterPro" id="IPR050361">
    <property type="entry name" value="MPP/UQCRC_Complex"/>
</dbReference>
<dbReference type="InterPro" id="IPR011765">
    <property type="entry name" value="Pept_M16_N"/>
</dbReference>
<dbReference type="PANTHER" id="PTHR11851">
    <property type="entry name" value="METALLOPROTEASE"/>
    <property type="match status" value="1"/>
</dbReference>
<dbReference type="PANTHER" id="PTHR11851:SF49">
    <property type="entry name" value="MITOCHONDRIAL-PROCESSING PEPTIDASE SUBUNIT ALPHA"/>
    <property type="match status" value="1"/>
</dbReference>
<dbReference type="Pfam" id="PF00675">
    <property type="entry name" value="Peptidase_M16"/>
    <property type="match status" value="1"/>
</dbReference>
<dbReference type="SUPFAM" id="SSF63411">
    <property type="entry name" value="LuxS/MPP-like metallohydrolase"/>
    <property type="match status" value="1"/>
</dbReference>
<sequence>MEKKAFFQQLDERTDIRYTDSGMKIIRLKFPRAHLRLCNVKIDFGSRDVCLQAESGDTLLPYGTAHFLEHLLFWHNGRNLYTDFFAHGALLNAFTTYTDTNFMFTSLPDRLRQTIPILLDALWNHSFDKKMITQEKAVITSEIQTAHLNHQLYYHYQLISMLSPASPAAVFPAGRIEDIEALDIRDLQKAYNAAYQPQRMTLFLIGGSEDTEALLPPHLRLEKRPNHKAERKIISACPPPALSQKMVLGNEERIEDTWTGLQVGAIPGQNNLLTLKLYWDIASRILFQLDSPFFQEIQQTYRLEIDCLSAEAHMYEDGGFLILHSQGAHSSAYIDVASYYVTQQKQQIETWLQYGKDSLTDAIIYDSDYVRKCFEWAAECDRCDCTFLDMYRIIHDMNSQDFLSLIDALASSKKAVIHVSQKEAIGQ</sequence>
<gene>
    <name type="primary">albF</name>
</gene>
<organism>
    <name type="scientific">Bacillus subtilis</name>
    <dbReference type="NCBI Taxonomy" id="1423"/>
    <lineage>
        <taxon>Bacteria</taxon>
        <taxon>Bacillati</taxon>
        <taxon>Bacillota</taxon>
        <taxon>Bacilli</taxon>
        <taxon>Bacillales</taxon>
        <taxon>Bacillaceae</taxon>
        <taxon>Bacillus</taxon>
    </lineage>
</organism>
<reference key="1">
    <citation type="submission" date="2002-02" db="EMBL/GenBank/DDBJ databases">
        <title>Subtilosin A biosynthesis is conserved among two different classes of Bacillus subtilis strains.</title>
        <authorList>
            <person name="Stein T."/>
            <person name="Duesterhus S."/>
            <person name="Entian K.-D."/>
        </authorList>
    </citation>
    <scope>NUCLEOTIDE SEQUENCE [GENOMIC DNA]</scope>
    <source>
        <strain>ATCC 6633 / PCI 219 / NRS 231</strain>
    </source>
</reference>
<evidence type="ECO:0000250" key="1"/>
<evidence type="ECO:0000305" key="2"/>